<feature type="chain" id="PRO_0000462272" description="Response regulator SSK1">
    <location>
        <begin position="1"/>
        <end position="1077"/>
    </location>
</feature>
<feature type="domain" description="Response regulatory" evidence="2">
    <location>
        <begin position="854"/>
        <end position="1000"/>
    </location>
</feature>
<feature type="modified residue" description="4-aspartylphosphate" evidence="2">
    <location>
        <position position="903"/>
    </location>
</feature>
<organism>
    <name type="scientific">Arthrobotrys oligospora (strain ATCC 24927 / CBS 115.81 / DSM 1491)</name>
    <name type="common">Nematode-trapping fungus</name>
    <name type="synonym">Didymozoophaga oligospora</name>
    <dbReference type="NCBI Taxonomy" id="756982"/>
    <lineage>
        <taxon>Eukaryota</taxon>
        <taxon>Fungi</taxon>
        <taxon>Dikarya</taxon>
        <taxon>Ascomycota</taxon>
        <taxon>Pezizomycotina</taxon>
        <taxon>Orbiliomycetes</taxon>
        <taxon>Orbiliales</taxon>
        <taxon>Orbiliaceae</taxon>
        <taxon>Orbilia</taxon>
        <taxon>Orbilia oligospora</taxon>
    </lineage>
</organism>
<name>SSK1_ARTOA</name>
<protein>
    <recommendedName>
        <fullName evidence="5">Response regulator SSK1</fullName>
    </recommendedName>
</protein>
<dbReference type="EMBL" id="ADOT01000197">
    <property type="protein sequence ID" value="EGX45997.1"/>
    <property type="molecule type" value="Genomic_DNA"/>
</dbReference>
<dbReference type="RefSeq" id="XP_011125346.1">
    <property type="nucleotide sequence ID" value="XM_011127044.1"/>
</dbReference>
<dbReference type="STRING" id="756982.G1XLI4"/>
<dbReference type="GeneID" id="22896357"/>
<dbReference type="eggNOG" id="KOG0519">
    <property type="taxonomic scope" value="Eukaryota"/>
</dbReference>
<dbReference type="HOGENOM" id="CLU_292045_0_0_1"/>
<dbReference type="InParanoid" id="G1XLI4"/>
<dbReference type="OMA" id="TVRSTHN"/>
<dbReference type="OrthoDB" id="1946660at4890"/>
<dbReference type="PHI-base" id="PHI:12192"/>
<dbReference type="Proteomes" id="UP000008784">
    <property type="component" value="Unassembled WGS sequence"/>
</dbReference>
<dbReference type="GO" id="GO:0000160">
    <property type="term" value="P:phosphorelay signal transduction system"/>
    <property type="evidence" value="ECO:0007669"/>
    <property type="project" value="UniProtKB-KW"/>
</dbReference>
<dbReference type="CDD" id="cd17546">
    <property type="entry name" value="REC_hyHK_CKI1_RcsC-like"/>
    <property type="match status" value="1"/>
</dbReference>
<dbReference type="FunFam" id="3.40.50.2300:FF:000146">
    <property type="entry name" value="Putative two-component response regulator SSK1p"/>
    <property type="match status" value="1"/>
</dbReference>
<dbReference type="Gene3D" id="3.40.50.2300">
    <property type="match status" value="1"/>
</dbReference>
<dbReference type="InterPro" id="IPR011006">
    <property type="entry name" value="CheY-like_superfamily"/>
</dbReference>
<dbReference type="InterPro" id="IPR001789">
    <property type="entry name" value="Sig_transdc_resp-reg_receiver"/>
</dbReference>
<dbReference type="PANTHER" id="PTHR45339">
    <property type="entry name" value="HYBRID SIGNAL TRANSDUCTION HISTIDINE KINASE J"/>
    <property type="match status" value="1"/>
</dbReference>
<dbReference type="PANTHER" id="PTHR45339:SF1">
    <property type="entry name" value="HYBRID SIGNAL TRANSDUCTION HISTIDINE KINASE J"/>
    <property type="match status" value="1"/>
</dbReference>
<dbReference type="Pfam" id="PF00072">
    <property type="entry name" value="Response_reg"/>
    <property type="match status" value="1"/>
</dbReference>
<dbReference type="SMART" id="SM00448">
    <property type="entry name" value="REC"/>
    <property type="match status" value="1"/>
</dbReference>
<dbReference type="SUPFAM" id="SSF52172">
    <property type="entry name" value="CheY-like"/>
    <property type="match status" value="1"/>
</dbReference>
<dbReference type="PROSITE" id="PS50110">
    <property type="entry name" value="RESPONSE_REGULATORY"/>
    <property type="match status" value="1"/>
</dbReference>
<reference key="1">
    <citation type="journal article" date="2011" name="PLoS Pathog.">
        <title>Genomic and proteomic analyses of the fungus Arthrobotrys oligospora provide insights into nematode-trap formation.</title>
        <authorList>
            <person name="Yang J."/>
            <person name="Wang L."/>
            <person name="Ji X."/>
            <person name="Feng Y."/>
            <person name="Li X."/>
            <person name="Zou C."/>
            <person name="Xu J."/>
            <person name="Ren Y."/>
            <person name="Mi Q."/>
            <person name="Wu J."/>
            <person name="Liu S."/>
            <person name="Liu Y."/>
            <person name="Huang X."/>
            <person name="Wang H."/>
            <person name="Niu X."/>
            <person name="Li J."/>
            <person name="Liang L."/>
            <person name="Luo Y."/>
            <person name="Ji K."/>
            <person name="Zhou W."/>
            <person name="Yu Z."/>
            <person name="Li G."/>
            <person name="Liu Y."/>
            <person name="Li L."/>
            <person name="Qiao M."/>
            <person name="Feng L."/>
            <person name="Zhang K.-Q."/>
        </authorList>
    </citation>
    <scope>NUCLEOTIDE SEQUENCE [LARGE SCALE GENOMIC DNA]</scope>
    <source>
        <strain>ATCC 24927 / CBS 115.81 / DSM 1491</strain>
    </source>
</reference>
<reference key="2">
    <citation type="journal article" date="2022" name="J. Fungi">
        <title>AoSsk1, a Response Regulator Required for Mycelial Growth and Development, Stress Responses, Trap Formation, and the Secondary Metabolism in Arthrobotrys oligospora.</title>
        <authorList>
            <person name="Jiang K.X."/>
            <person name="Liu Q.Q."/>
            <person name="Bai N."/>
            <person name="Zhu M.C."/>
            <person name="Zhang K.Q."/>
            <person name="Yang J.K."/>
        </authorList>
    </citation>
    <scope>FUNCTION</scope>
    <scope>DISRUPTION PHENOTYPE</scope>
</reference>
<reference key="3">
    <citation type="journal article" date="2025" name="J. Adv. Res.">
        <title>Identification of a transcription factor AoMsn2 of the Hog1 signaling pathway contributes to fungal growth, development and pathogenicity in Arthrobotrys oligospora.</title>
        <authorList>
            <person name="Liu Q."/>
            <person name="Jiang K."/>
            <person name="Duan S."/>
            <person name="Zhao N."/>
            <person name="Shen Y."/>
            <person name="Zhu L."/>
            <person name="Zhang K.Q."/>
            <person name="Yang J."/>
        </authorList>
    </citation>
    <scope>FUNCTION</scope>
</reference>
<evidence type="ECO:0000250" key="1">
    <source>
        <dbReference type="UniProtKB" id="Q07084"/>
    </source>
</evidence>
<evidence type="ECO:0000255" key="2">
    <source>
        <dbReference type="PROSITE-ProRule" id="PRU00169"/>
    </source>
</evidence>
<evidence type="ECO:0000269" key="3">
    <source>
    </source>
</evidence>
<evidence type="ECO:0000269" key="4">
    <source>
    </source>
</evidence>
<evidence type="ECO:0000303" key="5">
    <source>
    </source>
</evidence>
<evidence type="ECO:0000305" key="6"/>
<accession>G1XLI4</accession>
<gene>
    <name evidence="5" type="primary">SSK1</name>
    <name type="ORF">AOL_s00112g14</name>
</gene>
<comment type="function">
    <text evidence="3 4">Two-domain response regulator protein in the two-component signal transduction system of the HOG1 pathway (PubMed:35330262, PubMed:38331317). Involved in multi-stress responses and is essential for conidiation, secondary metabolism, autophagy and endocyrosis (PubMed:35330262). In addition, regulates mycelial growth, cell nucleus development, septum formation, and organelle development (PubMed:35330262). Also regulates trap formation and thus plays a crucial role in pathogenicity (PubMed:35330262).</text>
</comment>
<comment type="subcellular location">
    <subcellularLocation>
        <location evidence="1">Cytoplasm</location>
    </subcellularLocation>
</comment>
<comment type="disruption phenotype">
    <text evidence="3">Results in defective growth, deformed and swollen hyphal cells, an increased hyphal septum, and a shrunken nucleus (PubMed:35330262). Decreases the number of autophagosomes and lipid droplets in the hyphal cells, whereas their volumes considerably increases (PubMed:35330262). Causes a 95% reduction in conidial yield and remarkable defects in tolerance to osmotic and oxidative stress (PubMed:35330262). Also significantly decreases the transcript levels of sporulation-related genes (PubMed:35330262). Leads in a remarkable increase in trap formation and predation efficiency (PubMed:35330262). Finally, affects metabolic pathways such as the degradation of the aromatic compounds toluene, naphthalene, and cholesterol; the chorismate metabolism; and the biosynthesis of trichothecene, steroid hormones, gibberellin, scopolin, esculin, and novobiocin (PubMed:35330262).</text>
</comment>
<comment type="similarity">
    <text evidence="6">Belongs to the SSK1 family.</text>
</comment>
<proteinExistence type="inferred from homology"/>
<sequence>MLLWKAAATKLRGVKGMRGFRDKIKGTKTKLLRRDSKDSTEEASAVRPSKTAKGGPGTGTETGSGGSGEGSWGRKSKRHSLIGRDPSRSDQSLVAPSDRTFDTTTDLDTTSISGNGNANPTASANGDIVIEGGTAPKRRSAGKEFDNLEDGTGLQPQLLNTTAKPLELSPAPPLTDTTGSIESPSTAAPDKGSFNCELPVVLSQKDSLKLNKNGILVGVESRPPSQIPLAENENLQPQPQPQPPQSNAAATAASAASVSALIQPSEGTPSKASTTGQSSTLSLPSDKTVILESTTPAVPSTSTPSTNIAATTTTAAITTTSVPAPTTTISRTPSRKLSDRSSDLSINTTNLPPPFTRPYRLSQFPTDSSGLRADTDSSALSQLQRSSSRASLGIHEPIAPETVEPPFRDKRESSFSHGPETLVYTGPLLHNPPEPASVVPVAAEVAQTLHTVSETGTFQPTELARNESVVSRNESVKSRILSSSGSRRKHPLSFSRRQSLIHPSDTGLLRYLLEQESASPTTYGREGGSNIQSVAGLMPHSENQLRTRKVWVKRPGGSPTQVIVTEDDFVDTVRDLCLRKYTNALGRHYDSPDLMIRISPPLKPQSARARQMGNMQTHTDRLLNPDEVLCQLLDDYYPNGQTSEDALIVEVPQQQRSRTPRPSPGPHSMSYAYGQTVHDLQLPGEDYFTPVGTIVPSIPHSQSGTVRSTHNLPANPSSLSNYIANSPPPSSPGHRSLKRPGPVRMTTGSPVGSTTSSAPGGGGGGVMLIPRAGGVVPDRIRATNVEAPTSPSVPPQMVALPSSPGIIKPIPQKPASPGVLPAVTSPPAITRPPPKSKEITASIGTLDGQVPSINVLIVEDNIINLRLLEAFMKRLKVRWATAMNGREAVTKWRTGGFQLVLMDIQLPIMNGLDATKEIRRLERLNGIGSFSSSPSGPEDELSSADKLDKSLVFKGSVIIVALTASSLRSDRDEALAVGCNDFLTKPVNFTFLERKVMEWGCMQALIDFEGWRKWKDLASKPGASGGKTSKGGRGKASASTSAAAKKGKESSISVLDNASSSSSTPQPTQSVPIAGQS</sequence>
<keyword id="KW-0963">Cytoplasm</keyword>
<keyword id="KW-0597">Phosphoprotein</keyword>
<keyword id="KW-1185">Reference proteome</keyword>
<keyword id="KW-0902">Two-component regulatory system</keyword>
<keyword id="KW-0843">Virulence</keyword>